<name>RPOB_SALG2</name>
<evidence type="ECO:0000255" key="1">
    <source>
        <dbReference type="HAMAP-Rule" id="MF_01321"/>
    </source>
</evidence>
<protein>
    <recommendedName>
        <fullName evidence="1">DNA-directed RNA polymerase subunit beta</fullName>
        <shortName evidence="1">RNAP subunit beta</shortName>
        <ecNumber evidence="1">2.7.7.6</ecNumber>
    </recommendedName>
    <alternativeName>
        <fullName evidence="1">RNA polymerase subunit beta</fullName>
    </alternativeName>
    <alternativeName>
        <fullName evidence="1">Transcriptase subunit beta</fullName>
    </alternativeName>
</protein>
<accession>B5RFK1</accession>
<gene>
    <name evidence="1" type="primary">rpoB</name>
    <name type="ordered locus">SG3454</name>
</gene>
<proteinExistence type="inferred from homology"/>
<dbReference type="EC" id="2.7.7.6" evidence="1"/>
<dbReference type="EMBL" id="AM933173">
    <property type="protein sequence ID" value="CAR39244.1"/>
    <property type="molecule type" value="Genomic_DNA"/>
</dbReference>
<dbReference type="RefSeq" id="WP_000263096.1">
    <property type="nucleotide sequence ID" value="NC_011274.1"/>
</dbReference>
<dbReference type="SMR" id="B5RFK1"/>
<dbReference type="KEGG" id="seg:SG3454"/>
<dbReference type="HOGENOM" id="CLU_000524_4_0_6"/>
<dbReference type="Proteomes" id="UP000008321">
    <property type="component" value="Chromosome"/>
</dbReference>
<dbReference type="GO" id="GO:0000428">
    <property type="term" value="C:DNA-directed RNA polymerase complex"/>
    <property type="evidence" value="ECO:0007669"/>
    <property type="project" value="UniProtKB-KW"/>
</dbReference>
<dbReference type="GO" id="GO:0003677">
    <property type="term" value="F:DNA binding"/>
    <property type="evidence" value="ECO:0007669"/>
    <property type="project" value="UniProtKB-UniRule"/>
</dbReference>
<dbReference type="GO" id="GO:0003899">
    <property type="term" value="F:DNA-directed RNA polymerase activity"/>
    <property type="evidence" value="ECO:0007669"/>
    <property type="project" value="UniProtKB-UniRule"/>
</dbReference>
<dbReference type="GO" id="GO:0032549">
    <property type="term" value="F:ribonucleoside binding"/>
    <property type="evidence" value="ECO:0007669"/>
    <property type="project" value="InterPro"/>
</dbReference>
<dbReference type="GO" id="GO:0006351">
    <property type="term" value="P:DNA-templated transcription"/>
    <property type="evidence" value="ECO:0007669"/>
    <property type="project" value="UniProtKB-UniRule"/>
</dbReference>
<dbReference type="CDD" id="cd00653">
    <property type="entry name" value="RNA_pol_B_RPB2"/>
    <property type="match status" value="1"/>
</dbReference>
<dbReference type="FunFam" id="2.30.150.10:FF:000001">
    <property type="entry name" value="DNA-directed RNA polymerase subunit beta"/>
    <property type="match status" value="1"/>
</dbReference>
<dbReference type="FunFam" id="2.40.270.10:FF:000003">
    <property type="entry name" value="DNA-directed RNA polymerase subunit beta"/>
    <property type="match status" value="1"/>
</dbReference>
<dbReference type="FunFam" id="2.40.270.10:FF:000004">
    <property type="entry name" value="DNA-directed RNA polymerase subunit beta"/>
    <property type="match status" value="1"/>
</dbReference>
<dbReference type="FunFam" id="2.40.50.100:FF:000006">
    <property type="entry name" value="DNA-directed RNA polymerase subunit beta"/>
    <property type="match status" value="1"/>
</dbReference>
<dbReference type="FunFam" id="2.40.50.150:FF:000001">
    <property type="entry name" value="DNA-directed RNA polymerase subunit beta"/>
    <property type="match status" value="1"/>
</dbReference>
<dbReference type="FunFam" id="3.90.1100.10:FF:000002">
    <property type="entry name" value="DNA-directed RNA polymerase subunit beta"/>
    <property type="match status" value="1"/>
</dbReference>
<dbReference type="FunFam" id="3.90.1110.10:FF:000001">
    <property type="entry name" value="DNA-directed RNA polymerase subunit beta"/>
    <property type="match status" value="1"/>
</dbReference>
<dbReference type="FunFam" id="3.90.1110.10:FF:000004">
    <property type="entry name" value="DNA-directed RNA polymerase subunit beta"/>
    <property type="match status" value="1"/>
</dbReference>
<dbReference type="FunFam" id="3.90.1800.10:FF:000001">
    <property type="entry name" value="DNA-directed RNA polymerase subunit beta"/>
    <property type="match status" value="1"/>
</dbReference>
<dbReference type="Gene3D" id="2.40.50.100">
    <property type="match status" value="1"/>
</dbReference>
<dbReference type="Gene3D" id="2.40.50.150">
    <property type="match status" value="1"/>
</dbReference>
<dbReference type="Gene3D" id="3.90.1100.10">
    <property type="match status" value="2"/>
</dbReference>
<dbReference type="Gene3D" id="6.10.140.1670">
    <property type="match status" value="1"/>
</dbReference>
<dbReference type="Gene3D" id="2.30.150.10">
    <property type="entry name" value="DNA-directed RNA polymerase, beta subunit, external 1 domain"/>
    <property type="match status" value="1"/>
</dbReference>
<dbReference type="Gene3D" id="2.40.270.10">
    <property type="entry name" value="DNA-directed RNA polymerase, subunit 2, domain 6"/>
    <property type="match status" value="1"/>
</dbReference>
<dbReference type="Gene3D" id="3.90.1800.10">
    <property type="entry name" value="RNA polymerase alpha subunit dimerisation domain"/>
    <property type="match status" value="1"/>
</dbReference>
<dbReference type="Gene3D" id="3.90.1110.10">
    <property type="entry name" value="RNA polymerase Rpb2, domain 2"/>
    <property type="match status" value="1"/>
</dbReference>
<dbReference type="HAMAP" id="MF_01321">
    <property type="entry name" value="RNApol_bact_RpoB"/>
    <property type="match status" value="1"/>
</dbReference>
<dbReference type="InterPro" id="IPR042107">
    <property type="entry name" value="DNA-dir_RNA_pol_bsu_ext_1_sf"/>
</dbReference>
<dbReference type="InterPro" id="IPR019462">
    <property type="entry name" value="DNA-dir_RNA_pol_bsu_external_1"/>
</dbReference>
<dbReference type="InterPro" id="IPR015712">
    <property type="entry name" value="DNA-dir_RNA_pol_su2"/>
</dbReference>
<dbReference type="InterPro" id="IPR007120">
    <property type="entry name" value="DNA-dir_RNAP_su2_dom"/>
</dbReference>
<dbReference type="InterPro" id="IPR037033">
    <property type="entry name" value="DNA-dir_RNAP_su2_hyb_sf"/>
</dbReference>
<dbReference type="InterPro" id="IPR010243">
    <property type="entry name" value="RNA_pol_bsu_bac"/>
</dbReference>
<dbReference type="InterPro" id="IPR007121">
    <property type="entry name" value="RNA_pol_bsu_CS"/>
</dbReference>
<dbReference type="InterPro" id="IPR007644">
    <property type="entry name" value="RNA_pol_bsu_protrusion"/>
</dbReference>
<dbReference type="InterPro" id="IPR007642">
    <property type="entry name" value="RNA_pol_Rpb2_2"/>
</dbReference>
<dbReference type="InterPro" id="IPR037034">
    <property type="entry name" value="RNA_pol_Rpb2_2_sf"/>
</dbReference>
<dbReference type="InterPro" id="IPR007645">
    <property type="entry name" value="RNA_pol_Rpb2_3"/>
</dbReference>
<dbReference type="InterPro" id="IPR007641">
    <property type="entry name" value="RNA_pol_Rpb2_7"/>
</dbReference>
<dbReference type="InterPro" id="IPR014724">
    <property type="entry name" value="RNA_pol_RPB2_OB-fold"/>
</dbReference>
<dbReference type="NCBIfam" id="NF001616">
    <property type="entry name" value="PRK00405.1"/>
    <property type="match status" value="1"/>
</dbReference>
<dbReference type="NCBIfam" id="TIGR02013">
    <property type="entry name" value="rpoB"/>
    <property type="match status" value="1"/>
</dbReference>
<dbReference type="PANTHER" id="PTHR20856">
    <property type="entry name" value="DNA-DIRECTED RNA POLYMERASE I SUBUNIT 2"/>
    <property type="match status" value="1"/>
</dbReference>
<dbReference type="Pfam" id="PF04563">
    <property type="entry name" value="RNA_pol_Rpb2_1"/>
    <property type="match status" value="1"/>
</dbReference>
<dbReference type="Pfam" id="PF04561">
    <property type="entry name" value="RNA_pol_Rpb2_2"/>
    <property type="match status" value="2"/>
</dbReference>
<dbReference type="Pfam" id="PF04565">
    <property type="entry name" value="RNA_pol_Rpb2_3"/>
    <property type="match status" value="1"/>
</dbReference>
<dbReference type="Pfam" id="PF10385">
    <property type="entry name" value="RNA_pol_Rpb2_45"/>
    <property type="match status" value="1"/>
</dbReference>
<dbReference type="Pfam" id="PF00562">
    <property type="entry name" value="RNA_pol_Rpb2_6"/>
    <property type="match status" value="1"/>
</dbReference>
<dbReference type="Pfam" id="PF04560">
    <property type="entry name" value="RNA_pol_Rpb2_7"/>
    <property type="match status" value="1"/>
</dbReference>
<dbReference type="SUPFAM" id="SSF64484">
    <property type="entry name" value="beta and beta-prime subunits of DNA dependent RNA-polymerase"/>
    <property type="match status" value="1"/>
</dbReference>
<dbReference type="PROSITE" id="PS01166">
    <property type="entry name" value="RNA_POL_BETA"/>
    <property type="match status" value="1"/>
</dbReference>
<keyword id="KW-0240">DNA-directed RNA polymerase</keyword>
<keyword id="KW-0548">Nucleotidyltransferase</keyword>
<keyword id="KW-0804">Transcription</keyword>
<keyword id="KW-0808">Transferase</keyword>
<comment type="function">
    <text evidence="1">DNA-dependent RNA polymerase catalyzes the transcription of DNA into RNA using the four ribonucleoside triphosphates as substrates.</text>
</comment>
<comment type="catalytic activity">
    <reaction evidence="1">
        <text>RNA(n) + a ribonucleoside 5'-triphosphate = RNA(n+1) + diphosphate</text>
        <dbReference type="Rhea" id="RHEA:21248"/>
        <dbReference type="Rhea" id="RHEA-COMP:14527"/>
        <dbReference type="Rhea" id="RHEA-COMP:17342"/>
        <dbReference type="ChEBI" id="CHEBI:33019"/>
        <dbReference type="ChEBI" id="CHEBI:61557"/>
        <dbReference type="ChEBI" id="CHEBI:140395"/>
        <dbReference type="EC" id="2.7.7.6"/>
    </reaction>
</comment>
<comment type="subunit">
    <text evidence="1">The RNAP catalytic core consists of 2 alpha, 1 beta, 1 beta' and 1 omega subunit. When a sigma factor is associated with the core the holoenzyme is formed, which can initiate transcription.</text>
</comment>
<comment type="similarity">
    <text evidence="1">Belongs to the RNA polymerase beta chain family.</text>
</comment>
<organism>
    <name type="scientific">Salmonella gallinarum (strain 287/91 / NCTC 13346)</name>
    <dbReference type="NCBI Taxonomy" id="550538"/>
    <lineage>
        <taxon>Bacteria</taxon>
        <taxon>Pseudomonadati</taxon>
        <taxon>Pseudomonadota</taxon>
        <taxon>Gammaproteobacteria</taxon>
        <taxon>Enterobacterales</taxon>
        <taxon>Enterobacteriaceae</taxon>
        <taxon>Salmonella</taxon>
    </lineage>
</organism>
<sequence length="1342" mass="150511">MVYSYTEKKRIRKDFGKRPQVLDVPYLLSIQLDSFQKFIEQDPEGQCGLEAAFRSVFPIQSYSGNSELQYVSYRLGEPVFDVQECQIRGVTYSAPLRVKLRLVIYEREAPEGTVKDIKEQEVYMGEIPLMTDNGTFVINGTERVIVSQLHRSPGVFFDSDKGKTHSSGKVLYNARIIPYRGSWLDFEFDPKDNLFVRIDRRRKLPATIILRALNYTTEQILDLFFEKVVFEIRDNKLQMELIPERLRGETASFDIEANGKVYVEKGRRITARHIRQLEKDDIKHIEVPVEYIAGKVVSKDYVDESTGELICAANMELSLDLLAKLSQSGHKRIETLFTNDLDHGPYISETVRVDPTNDRLSALVEIYRMMRPGEPPTREAAESLFENLFFSEDRYDLSAVGRMKFNRSLLRDEIEGSGILSKDDIIDVMKKLIDIRNGKGEVDDIDHLGNRRIRSVGEMAENQFRVGLVRVERAVKERLSLGDLDTLMPQDMINAKPISAAVKEFFGSSQLSQFMDQNNPLSEITHKRRISALGPGGLTRERAGFEVRDVHPTHYGRVCPIETPEGPNIGLINSLSVYAQTNEYGFLETPYRRVVDGVVTDEIHYLSAIEEGNYVIAQANSNLDDEGHFVEDLVTCRSKGESSLFSRDQVDYMDVSTQQVVSVGASLIPFLEHDDANRALMGANMQRQAVPTLRADKPLVGTGMERAVAVDSGVTAVAKRGGTVQYVDASRIVIKVNEDEMYPGEAGIDIYNLTKYTRSNQNTCINQMPCVSLGEPVERGDVLADGPSTDLGELALGQNMRVAFMPWNGYNFEDSILVSERVVQEDRFTTIHIQELACVSRDTKLGPEEITADIPNVGEAALSKLDESGIVYIGAEVTGGDILVGKVTPKGETQLTPEEKLLRAIFGEKASDVKDSSLRVPNGVSGTVIDVQVFTRDGVEKDKRALEIEEMQLKQAKKDLSEELQILEAGLFSRIRAVLVSGGVEAEKLDKLPRDRWLELGLTDEEKQNQLEQLAEQYDELKHEFEKKLEAKRRKITKGDDLAPGVLKIVKVYLAVKRRIQPGDKMAGRHGNKGVISKINPIEDMPYDENGTPVDIVLNPLGVPSRMNIGQILETHLGMAAKGIGDKINAMLKQQQEVAKLREFIQRAYDLGADVRQKVDLSTFSDDEVLRLAENLRKGMPIATPVFDGAKEAEIKELLKLGDLPTSGQITLFDGRTGEQFERPVTVGYMYMLKLNHLVDDKMHARSTGSYSLVTQQPLGGKAQFGGQRFGEMEVWALEAYGAAYTLQEMLTVKSDDVNGRTKMYKNIVDGNHQMEPGMPESFNVLLKEIRSLGINIELEDE</sequence>
<reference key="1">
    <citation type="journal article" date="2008" name="Genome Res.">
        <title>Comparative genome analysis of Salmonella enteritidis PT4 and Salmonella gallinarum 287/91 provides insights into evolutionary and host adaptation pathways.</title>
        <authorList>
            <person name="Thomson N.R."/>
            <person name="Clayton D.J."/>
            <person name="Windhorst D."/>
            <person name="Vernikos G."/>
            <person name="Davidson S."/>
            <person name="Churcher C."/>
            <person name="Quail M.A."/>
            <person name="Stevens M."/>
            <person name="Jones M.A."/>
            <person name="Watson M."/>
            <person name="Barron A."/>
            <person name="Layton A."/>
            <person name="Pickard D."/>
            <person name="Kingsley R.A."/>
            <person name="Bignell A."/>
            <person name="Clark L."/>
            <person name="Harris B."/>
            <person name="Ormond D."/>
            <person name="Abdellah Z."/>
            <person name="Brooks K."/>
            <person name="Cherevach I."/>
            <person name="Chillingworth T."/>
            <person name="Woodward J."/>
            <person name="Norberczak H."/>
            <person name="Lord A."/>
            <person name="Arrowsmith C."/>
            <person name="Jagels K."/>
            <person name="Moule S."/>
            <person name="Mungall K."/>
            <person name="Saunders M."/>
            <person name="Whitehead S."/>
            <person name="Chabalgoity J.A."/>
            <person name="Maskell D."/>
            <person name="Humphreys T."/>
            <person name="Roberts M."/>
            <person name="Barrow P.A."/>
            <person name="Dougan G."/>
            <person name="Parkhill J."/>
        </authorList>
    </citation>
    <scope>NUCLEOTIDE SEQUENCE [LARGE SCALE GENOMIC DNA]</scope>
    <source>
        <strain>287/91 / NCTC 13346</strain>
    </source>
</reference>
<feature type="chain" id="PRO_1000141732" description="DNA-directed RNA polymerase subunit beta">
    <location>
        <begin position="1"/>
        <end position="1342"/>
    </location>
</feature>